<proteinExistence type="evidence at protein level"/>
<reference key="1">
    <citation type="journal article" date="2004" name="Proc. Natl. Acad. Sci. U.S.A.">
        <title>The diploid genome sequence of Candida albicans.</title>
        <authorList>
            <person name="Jones T."/>
            <person name="Federspiel N.A."/>
            <person name="Chibana H."/>
            <person name="Dungan J."/>
            <person name="Kalman S."/>
            <person name="Magee B.B."/>
            <person name="Newport G."/>
            <person name="Thorstenson Y.R."/>
            <person name="Agabian N."/>
            <person name="Magee P.T."/>
            <person name="Davis R.W."/>
            <person name="Scherer S."/>
        </authorList>
    </citation>
    <scope>NUCLEOTIDE SEQUENCE [LARGE SCALE GENOMIC DNA]</scope>
    <source>
        <strain>SC5314 / ATCC MYA-2876</strain>
    </source>
</reference>
<reference key="2">
    <citation type="journal article" date="2007" name="Genome Biol.">
        <title>Assembly of the Candida albicans genome into sixteen supercontigs aligned on the eight chromosomes.</title>
        <authorList>
            <person name="van het Hoog M."/>
            <person name="Rast T.J."/>
            <person name="Martchenko M."/>
            <person name="Grindle S."/>
            <person name="Dignard D."/>
            <person name="Hogues H."/>
            <person name="Cuomo C."/>
            <person name="Berriman M."/>
            <person name="Scherer S."/>
            <person name="Magee B.B."/>
            <person name="Whiteway M."/>
            <person name="Chibana H."/>
            <person name="Nantel A."/>
            <person name="Magee P.T."/>
        </authorList>
    </citation>
    <scope>GENOME REANNOTATION</scope>
    <source>
        <strain>SC5314 / ATCC MYA-2876</strain>
    </source>
</reference>
<reference key="3">
    <citation type="journal article" date="2013" name="Genome Biol.">
        <title>Assembly of a phased diploid Candida albicans genome facilitates allele-specific measurements and provides a simple model for repeat and indel structure.</title>
        <authorList>
            <person name="Muzzey D."/>
            <person name="Schwartz K."/>
            <person name="Weissman J.S."/>
            <person name="Sherlock G."/>
        </authorList>
    </citation>
    <scope>NUCLEOTIDE SEQUENCE [LARGE SCALE GENOMIC DNA]</scope>
    <scope>GENOME REANNOTATION</scope>
    <source>
        <strain>SC5314 / ATCC MYA-2876</strain>
    </source>
</reference>
<reference key="4">
    <citation type="journal article" date="2004" name="Eukaryot. Cell">
        <title>RBR1, a novel pH-regulated cell wall gene of Candida albicans, is repressed by RIM101 and activated by NRG1.</title>
        <authorList>
            <person name="Lotz H."/>
            <person name="Sohn K."/>
            <person name="Brunner H."/>
            <person name="Muhlschlegel F.A."/>
            <person name="Rupp S."/>
        </authorList>
    </citation>
    <scope>INDUCTION</scope>
</reference>
<reference key="5">
    <citation type="journal article" date="2007" name="Infect. Immun.">
        <title>Candida albicans Iff11, a secreted protein required for cell wall structure and virulence.</title>
        <authorList>
            <person name="Bates S."/>
            <person name="de la Rosa J.M."/>
            <person name="MacCallum D.M."/>
            <person name="Brown A.J."/>
            <person name="Gow N.A."/>
            <person name="Odds F.C."/>
        </authorList>
    </citation>
    <scope>IDENTIFICATION IN THE HYR1/IFF FAMILY</scope>
    <scope>PREDICTION OF GPI-ANCHOR</scope>
</reference>
<reference key="6">
    <citation type="journal article" date="2011" name="Eukaryot. Cell">
        <title>Unexpected role for a serine/threonine-rich domain in the Candida albicans Iff protein family.</title>
        <authorList>
            <person name="Boisrame A."/>
            <person name="Cornu A."/>
            <person name="Da Costa G."/>
            <person name="Richard M.L."/>
        </authorList>
    </citation>
    <scope>SUBCELLULAR LOCATION</scope>
</reference>
<feature type="signal peptide" evidence="2">
    <location>
        <begin position="1"/>
        <end position="20"/>
    </location>
</feature>
<feature type="chain" id="PRO_0000426733" description="Cell wall protein RBR3">
    <location>
        <begin position="21"/>
        <end position="1538"/>
    </location>
</feature>
<feature type="propeptide" id="PRO_0000426734" description="Removed in mature form" evidence="2">
    <location>
        <begin position="1539"/>
        <end position="1562"/>
    </location>
</feature>
<feature type="region of interest" description="Disordered" evidence="4">
    <location>
        <begin position="338"/>
        <end position="366"/>
    </location>
</feature>
<feature type="region of interest" description="Disordered" evidence="4">
    <location>
        <begin position="383"/>
        <end position="729"/>
    </location>
</feature>
<feature type="region of interest" description="Disordered" evidence="4">
    <location>
        <begin position="1404"/>
        <end position="1424"/>
    </location>
</feature>
<feature type="region of interest" description="Disordered" evidence="4">
    <location>
        <begin position="1455"/>
        <end position="1486"/>
    </location>
</feature>
<feature type="compositionally biased region" description="Low complexity" evidence="4">
    <location>
        <begin position="338"/>
        <end position="353"/>
    </location>
</feature>
<feature type="compositionally biased region" description="Low complexity" evidence="4">
    <location>
        <begin position="383"/>
        <end position="415"/>
    </location>
</feature>
<feature type="compositionally biased region" description="Low complexity" evidence="4">
    <location>
        <begin position="422"/>
        <end position="729"/>
    </location>
</feature>
<feature type="compositionally biased region" description="Gly residues" evidence="4">
    <location>
        <begin position="1407"/>
        <end position="1419"/>
    </location>
</feature>
<feature type="compositionally biased region" description="Polar residues" evidence="4">
    <location>
        <begin position="1468"/>
        <end position="1486"/>
    </location>
</feature>
<feature type="lipid moiety-binding region" description="GPI-anchor amidated asparagine" evidence="2">
    <location>
        <position position="1538"/>
    </location>
</feature>
<feature type="glycosylation site" description="N-linked (GlcNAc...) asparagine" evidence="3">
    <location>
        <position position="190"/>
    </location>
</feature>
<feature type="glycosylation site" description="N-linked (GlcNAc...) asparagine" evidence="3">
    <location>
        <position position="373"/>
    </location>
</feature>
<feature type="glycosylation site" description="N-linked (GlcNAc...) asparagine" evidence="3">
    <location>
        <position position="602"/>
    </location>
</feature>
<feature type="glycosylation site" description="N-linked (GlcNAc...) asparagine" evidence="3">
    <location>
        <position position="679"/>
    </location>
</feature>
<feature type="glycosylation site" description="N-linked (GlcNAc...) asparagine" evidence="3">
    <location>
        <position position="705"/>
    </location>
</feature>
<name>RBR3_CANAL</name>
<dbReference type="EMBL" id="CP017629">
    <property type="protein sequence ID" value="AOW30673.1"/>
    <property type="molecule type" value="Genomic_DNA"/>
</dbReference>
<dbReference type="RefSeq" id="XP_711686.2">
    <property type="nucleotide sequence ID" value="XM_706594.2"/>
</dbReference>
<dbReference type="STRING" id="237561.Q5A5M7"/>
<dbReference type="GlyCosmos" id="Q5A5M7">
    <property type="glycosylation" value="5 sites, No reported glycans"/>
</dbReference>
<dbReference type="EnsemblFungi" id="C7_03290C_A-T">
    <property type="protein sequence ID" value="C7_03290C_A-T-p1"/>
    <property type="gene ID" value="C7_03290C_A"/>
</dbReference>
<dbReference type="GeneID" id="3646728"/>
<dbReference type="KEGG" id="cal:CAALFM_C703290CA"/>
<dbReference type="CGD" id="CAL0000184067">
    <property type="gene designation" value="RBR3"/>
</dbReference>
<dbReference type="VEuPathDB" id="FungiDB:C7_03290C_A"/>
<dbReference type="eggNOG" id="KOG1216">
    <property type="taxonomic scope" value="Eukaryota"/>
</dbReference>
<dbReference type="HOGENOM" id="CLU_023496_1_0_1"/>
<dbReference type="InParanoid" id="Q5A5M7"/>
<dbReference type="OrthoDB" id="4022214at2759"/>
<dbReference type="PRO" id="PR:Q5A5M7"/>
<dbReference type="Proteomes" id="UP000000559">
    <property type="component" value="Chromosome 7"/>
</dbReference>
<dbReference type="GO" id="GO:0009986">
    <property type="term" value="C:cell surface"/>
    <property type="evidence" value="ECO:0000314"/>
    <property type="project" value="CGD"/>
</dbReference>
<dbReference type="GO" id="GO:0005576">
    <property type="term" value="C:extracellular region"/>
    <property type="evidence" value="ECO:0007669"/>
    <property type="project" value="UniProtKB-KW"/>
</dbReference>
<dbReference type="GO" id="GO:0009277">
    <property type="term" value="C:fungal-type cell wall"/>
    <property type="evidence" value="ECO:0000314"/>
    <property type="project" value="CGD"/>
</dbReference>
<dbReference type="GO" id="GO:0098552">
    <property type="term" value="C:side of membrane"/>
    <property type="evidence" value="ECO:0007669"/>
    <property type="project" value="UniProtKB-KW"/>
</dbReference>
<dbReference type="GO" id="GO:0031505">
    <property type="term" value="P:fungal-type cell wall organization"/>
    <property type="evidence" value="ECO:0000318"/>
    <property type="project" value="GO_Central"/>
</dbReference>
<dbReference type="InterPro" id="IPR031573">
    <property type="entry name" value="Cell_wall_rpt"/>
</dbReference>
<dbReference type="InterPro" id="IPR021031">
    <property type="entry name" value="Hyphal-reg_cell_wall_N"/>
</dbReference>
<dbReference type="Pfam" id="PF11765">
    <property type="entry name" value="Hyphal_reg_CWP"/>
    <property type="match status" value="1"/>
</dbReference>
<dbReference type="Pfam" id="PF15789">
    <property type="entry name" value="Hyr1"/>
    <property type="match status" value="10"/>
</dbReference>
<protein>
    <recommendedName>
        <fullName>Cell wall protein RBR3</fullName>
    </recommendedName>
    <alternativeName>
        <fullName>Repressed by RIM101 protein 3</fullName>
    </alternativeName>
</protein>
<sequence>MIIFRKSFFTFWLLLNSVLALVITQNRVDRGTLDLSVGDITINSGASWSIINNAISTLVGSLTVQPNAGLYITSTSPLLSLQVTLTSLLSTIQNNGIIAFNSSPSLTSSTYNLVGLSLVNTGEMYFSASGVLPSVMALTAASWSNSGLMAFYQNQRSSGVVSLGTPLGSITNNGQICLNNEVYQQTTSINGSGCFTANRDSTIYIANVLLPVSTSQNFYLADSQSSIIVQAILTPQVFNVYGFGNGNMVGVTLPLLGNILNPAYSYNPSTGILRLRNLLVYQDFNIGPGYNPSLFSIVTDNGAGLPSTILGSVSYSGPVPPRALPASCKIACKPVPTAPGTNPTEYTTTITTTNSAGKPLTETGVVDISTDSNGSWFSSTTIFPTSSSSSSSSSTVSSTAPSSSSTKPSSSSQPSSTPPPSSSSKASSTTPSSSSQSSSTTPSSSSKPSSTVPPTGSSQSSSTIPSSSTQPSSTAPSSLSSPSSSTTPSSSSQSSFSAQSSIGQTSSSTVSSSSSQPSSSQPSSSQSSSATTSSSSQFSSSAPPSSTQSSFTAESSNSQLSSTTPSSSTEASSTVPSSSSQLSSSVPLTNSVSLSSVSSSDNGSSSASSPSSSQSSIASTAESSSTFPSSSDQQSSSIQSPSSQESSVSSTPTSSLQSSTNTISSSQDSSSFSPTTSDNSSTNSASSLSTLSSSDTSVSNPSTSNVSSTDNTQSSVASATPTDSAISATSSDITTEFTTTWEVTNSDGSVSTESGIVSESGTSFTTITTFPPPTTSSDITTEFTTTWEVTNSDGSVSTESGIVSESGTSFTTITTFPPPTTSSDITTEFTTTWEVTNSDGSVSTESGIVSESGTSFTTITTFPPPTTSSDITTEFTTTWEVTNSDGSVSTESGIVSESGTSFTTITTFPPPTSSSVAADVTTEFTTTWEVTNSDGSVSTESGIVSESGTSFTTITTFELPVVCKRDDISCGPATSATNSDTAAQDPTSDATAIESEFTTTWTTTNSDGSVETNSGVVSQSGSSLTTITTFAPDATSEYTTSWTTTNSDGSVATNSGVVSQSGTSFTTITTFEPPVVCKRDDISCGPATSAMNSDTAAQQLTSGMTATETEFASTWVVTKSDGSVFTESGIVGQSGTSFTTLTTFAPTTSSGAVQTEYTSTWEVTNTDGSVSTKSGIIDQSGTYFTTLSTFAPTTISGAIETEFTSTWVATDTDGLVSTKSGIVSQSGTSIATLTIFPEPAGTVYPVTTLFTTEYVTTCPNGELSTATGVVVVSTDSKGIEQTVTSVVPSTVYTKETVTSIITHCIKNKCFESTTTLVSSVPCPTQVPGVFTSTDNGHGVPIASIDVTTGAATVSNTIKAQDSTGFTSAGNAITTAITATGAVTTSVGGQGSTDYSNAGNTIAAGSGSDSGSGSGSGSGSGSSSNTVGIVNPKVSSAASGITVAAASASAGQSWPYSSGGSGNGVLPSGANNVGSNQTPTVSGGNSNPSTVTGAAVGAGGVVSGSPSYSGNSLLISFVSSQSGAISSSTGVTIPIATENSGSKFSVGKSAFIAIILTTFIGFI</sequence>
<accession>Q5A5M7</accession>
<accession>A0A1D8PRA0</accession>
<accession>Q5A5F8</accession>
<comment type="function">
    <text evidence="1">GPI-anchored cell wall protein involved in cell wall organization, hyphal growth, as well as in host-fungal interaction and virulence.</text>
</comment>
<comment type="subcellular location">
    <subcellularLocation>
        <location evidence="6">Secreted</location>
        <location evidence="6">Cell wall</location>
    </subcellularLocation>
    <subcellularLocation>
        <location evidence="1">Membrane</location>
        <topology evidence="1">Lipid-anchor</topology>
        <topology evidence="1">GPI-anchor</topology>
    </subcellularLocation>
    <text evidence="1">Covalently-linked GPI-modified cell wall protein (GPI-CWP).</text>
</comment>
<comment type="induction">
    <text evidence="5">Expression is repressed by RIM101.</text>
</comment>
<comment type="PTM">
    <text evidence="1">The GPI-anchor is attached to the protein in the endoplasmic reticulum and serves to target the protein to the cell surface. There, the glucosamine-inositol phospholipid moiety is cleaved off and the GPI-modified mannoprotein is covalently attached via its lipidless GPI glycan remnant to the 1,6-beta-glucan of the outer cell wall layer (By similarity).</text>
</comment>
<comment type="similarity">
    <text evidence="7">Belongs to the HYR1/IFF family.</text>
</comment>
<evidence type="ECO:0000250" key="1"/>
<evidence type="ECO:0000255" key="2"/>
<evidence type="ECO:0000255" key="3">
    <source>
        <dbReference type="PROSITE-ProRule" id="PRU00498"/>
    </source>
</evidence>
<evidence type="ECO:0000256" key="4">
    <source>
        <dbReference type="SAM" id="MobiDB-lite"/>
    </source>
</evidence>
<evidence type="ECO:0000269" key="5">
    <source>
    </source>
</evidence>
<evidence type="ECO:0000269" key="6">
    <source>
    </source>
</evidence>
<evidence type="ECO:0000305" key="7"/>
<organism>
    <name type="scientific">Candida albicans (strain SC5314 / ATCC MYA-2876)</name>
    <name type="common">Yeast</name>
    <dbReference type="NCBI Taxonomy" id="237561"/>
    <lineage>
        <taxon>Eukaryota</taxon>
        <taxon>Fungi</taxon>
        <taxon>Dikarya</taxon>
        <taxon>Ascomycota</taxon>
        <taxon>Saccharomycotina</taxon>
        <taxon>Pichiomycetes</taxon>
        <taxon>Debaryomycetaceae</taxon>
        <taxon>Candida/Lodderomyces clade</taxon>
        <taxon>Candida</taxon>
    </lineage>
</organism>
<keyword id="KW-0134">Cell wall</keyword>
<keyword id="KW-0325">Glycoprotein</keyword>
<keyword id="KW-0336">GPI-anchor</keyword>
<keyword id="KW-0449">Lipoprotein</keyword>
<keyword id="KW-0472">Membrane</keyword>
<keyword id="KW-1185">Reference proteome</keyword>
<keyword id="KW-0964">Secreted</keyword>
<keyword id="KW-0732">Signal</keyword>
<keyword id="KW-0843">Virulence</keyword>
<gene>
    <name type="primary">RBR3</name>
    <name type="synonym">IFF1</name>
    <name type="ordered locus">CAALFM_C703290CA</name>
    <name type="ORF">CaO19.12589</name>
    <name type="ORF">CaO19.5124</name>
</gene>